<dbReference type="EMBL" id="U51478">
    <property type="protein sequence ID" value="AAC50665.1"/>
    <property type="molecule type" value="mRNA"/>
</dbReference>
<dbReference type="EMBL" id="AF005896">
    <property type="protein sequence ID" value="AAB61713.1"/>
    <property type="molecule type" value="Genomic_DNA"/>
</dbReference>
<dbReference type="EMBL" id="AF005890">
    <property type="protein sequence ID" value="AAB61713.1"/>
    <property type="status" value="JOINED"/>
    <property type="molecule type" value="Genomic_DNA"/>
</dbReference>
<dbReference type="EMBL" id="AF005891">
    <property type="protein sequence ID" value="AAB61713.1"/>
    <property type="status" value="JOINED"/>
    <property type="molecule type" value="Genomic_DNA"/>
</dbReference>
<dbReference type="EMBL" id="AF005892">
    <property type="protein sequence ID" value="AAB61713.1"/>
    <property type="status" value="JOINED"/>
    <property type="molecule type" value="Genomic_DNA"/>
</dbReference>
<dbReference type="EMBL" id="AF005893">
    <property type="protein sequence ID" value="AAB61713.1"/>
    <property type="status" value="JOINED"/>
    <property type="molecule type" value="Genomic_DNA"/>
</dbReference>
<dbReference type="EMBL" id="AF005894">
    <property type="protein sequence ID" value="AAB61713.1"/>
    <property type="status" value="JOINED"/>
    <property type="molecule type" value="Genomic_DNA"/>
</dbReference>
<dbReference type="EMBL" id="AF005895">
    <property type="protein sequence ID" value="AAB61713.1"/>
    <property type="status" value="JOINED"/>
    <property type="molecule type" value="Genomic_DNA"/>
</dbReference>
<dbReference type="EMBL" id="AK293697">
    <property type="protein sequence ID" value="BAH11573.1"/>
    <property type="molecule type" value="mRNA"/>
</dbReference>
<dbReference type="EMBL" id="AC112504">
    <property type="status" value="NOT_ANNOTATED_CDS"/>
    <property type="molecule type" value="Genomic_DNA"/>
</dbReference>
<dbReference type="EMBL" id="BC011835">
    <property type="protein sequence ID" value="AAH11835.1"/>
    <property type="molecule type" value="mRNA"/>
</dbReference>
<dbReference type="CCDS" id="CCDS3121.1">
    <molecule id="P54709-1"/>
</dbReference>
<dbReference type="PIR" id="G02485">
    <property type="entry name" value="G02485"/>
</dbReference>
<dbReference type="RefSeq" id="NP_001670.1">
    <molecule id="P54709-1"/>
    <property type="nucleotide sequence ID" value="NM_001679.4"/>
</dbReference>
<dbReference type="SMR" id="P54709"/>
<dbReference type="BioGRID" id="106973">
    <property type="interactions" value="249"/>
</dbReference>
<dbReference type="CORUM" id="P54709"/>
<dbReference type="DIP" id="DIP-50717N"/>
<dbReference type="FunCoup" id="P54709">
    <property type="interactions" value="1591"/>
</dbReference>
<dbReference type="IntAct" id="P54709">
    <property type="interactions" value="94"/>
</dbReference>
<dbReference type="MINT" id="P54709"/>
<dbReference type="STRING" id="9606.ENSP00000286371"/>
<dbReference type="BindingDB" id="P54709"/>
<dbReference type="ChEMBL" id="CHEMBL2095186"/>
<dbReference type="DrugBank" id="DB09020">
    <property type="generic name" value="Bisacodyl"/>
</dbReference>
<dbReference type="DrugBank" id="DB01396">
    <property type="generic name" value="Digitoxin"/>
</dbReference>
<dbReference type="DrugBank" id="DB00390">
    <property type="generic name" value="Digoxin"/>
</dbReference>
<dbReference type="DrugBank" id="DB06157">
    <property type="generic name" value="Istaroxime"/>
</dbReference>
<dbReference type="DrugBank" id="DB12843">
    <property type="generic name" value="Oleandrin"/>
</dbReference>
<dbReference type="DrugBank" id="DB01250">
    <property type="generic name" value="Olsalazine"/>
</dbReference>
<dbReference type="DrugBank" id="DB12350">
    <property type="generic name" value="Rostafuroxin"/>
</dbReference>
<dbReference type="DrugBank" id="DB09479">
    <property type="generic name" value="Rubidium Rb-82"/>
</dbReference>
<dbReference type="DrugBank" id="DB16690">
    <property type="generic name" value="Tegoprazan"/>
</dbReference>
<dbReference type="DrugCentral" id="P54709"/>
<dbReference type="TCDB" id="3.A.3.1.1">
    <property type="family name" value="the p-type atpase (p-atpase) superfamily"/>
</dbReference>
<dbReference type="GlyConnect" id="1759">
    <property type="glycosylation" value="8 N-Linked glycans (2 sites)"/>
</dbReference>
<dbReference type="GlyCosmos" id="P54709">
    <property type="glycosylation" value="2 sites, 7 glycans"/>
</dbReference>
<dbReference type="GlyGen" id="P54709">
    <property type="glycosylation" value="5 sites, 30 N-linked glycans (2 sites), 2 O-linked glycans (2 sites)"/>
</dbReference>
<dbReference type="iPTMnet" id="P54709"/>
<dbReference type="PhosphoSitePlus" id="P54709"/>
<dbReference type="SwissPalm" id="P54709"/>
<dbReference type="BioMuta" id="ATP1B3"/>
<dbReference type="DMDM" id="1703470"/>
<dbReference type="CPTAC" id="CPTAC-2206"/>
<dbReference type="jPOST" id="P54709"/>
<dbReference type="MassIVE" id="P54709"/>
<dbReference type="PaxDb" id="9606-ENSP00000286371"/>
<dbReference type="PeptideAtlas" id="P54709"/>
<dbReference type="ProteomicsDB" id="56697">
    <molecule id="P54709-1"/>
</dbReference>
<dbReference type="ProteomicsDB" id="6354"/>
<dbReference type="Pumba" id="P54709"/>
<dbReference type="TopDownProteomics" id="P54709-1">
    <molecule id="P54709-1"/>
</dbReference>
<dbReference type="Antibodypedia" id="33485">
    <property type="antibodies" value="404 antibodies from 32 providers"/>
</dbReference>
<dbReference type="DNASU" id="483"/>
<dbReference type="Ensembl" id="ENST00000286371.8">
    <molecule id="P54709-1"/>
    <property type="protein sequence ID" value="ENSP00000286371.3"/>
    <property type="gene ID" value="ENSG00000069849.11"/>
</dbReference>
<dbReference type="GeneID" id="483"/>
<dbReference type="KEGG" id="hsa:483"/>
<dbReference type="MANE-Select" id="ENST00000286371.8">
    <property type="protein sequence ID" value="ENSP00000286371.3"/>
    <property type="RefSeq nucleotide sequence ID" value="NM_001679.4"/>
    <property type="RefSeq protein sequence ID" value="NP_001670.1"/>
</dbReference>
<dbReference type="UCSC" id="uc003eug.2">
    <molecule id="P54709-1"/>
    <property type="organism name" value="human"/>
</dbReference>
<dbReference type="AGR" id="HGNC:806"/>
<dbReference type="CTD" id="483"/>
<dbReference type="DisGeNET" id="483"/>
<dbReference type="GeneCards" id="ATP1B3"/>
<dbReference type="HGNC" id="HGNC:806">
    <property type="gene designation" value="ATP1B3"/>
</dbReference>
<dbReference type="HPA" id="ENSG00000069849">
    <property type="expression patterns" value="Low tissue specificity"/>
</dbReference>
<dbReference type="MIM" id="601867">
    <property type="type" value="gene"/>
</dbReference>
<dbReference type="neXtProt" id="NX_P54709"/>
<dbReference type="OpenTargets" id="ENSG00000069849"/>
<dbReference type="PharmGKB" id="PA68"/>
<dbReference type="VEuPathDB" id="HostDB:ENSG00000069849"/>
<dbReference type="eggNOG" id="KOG3927">
    <property type="taxonomic scope" value="Eukaryota"/>
</dbReference>
<dbReference type="GeneTree" id="ENSGT01030000234579"/>
<dbReference type="HOGENOM" id="CLU_057702_1_1_1"/>
<dbReference type="InParanoid" id="P54709"/>
<dbReference type="OMA" id="NRNSGEF"/>
<dbReference type="OrthoDB" id="5912413at2759"/>
<dbReference type="PAN-GO" id="P54709">
    <property type="GO annotations" value="6 GO annotations based on evolutionary models"/>
</dbReference>
<dbReference type="PhylomeDB" id="P54709"/>
<dbReference type="TreeFam" id="TF314618"/>
<dbReference type="PathwayCommons" id="P54709"/>
<dbReference type="Reactome" id="R-HSA-210991">
    <property type="pathway name" value="Basigin interactions"/>
</dbReference>
<dbReference type="Reactome" id="R-HSA-5578775">
    <property type="pathway name" value="Ion homeostasis"/>
</dbReference>
<dbReference type="Reactome" id="R-HSA-936837">
    <property type="pathway name" value="Ion transport by P-type ATPases"/>
</dbReference>
<dbReference type="Reactome" id="R-HSA-9679191">
    <property type="pathway name" value="Potential therapeutics for SARS"/>
</dbReference>
<dbReference type="SignaLink" id="P54709"/>
<dbReference type="BioGRID-ORCS" id="483">
    <property type="hits" value="156 hits in 1129 CRISPR screens"/>
</dbReference>
<dbReference type="ChiTaRS" id="ATP1B3">
    <property type="organism name" value="human"/>
</dbReference>
<dbReference type="GeneWiki" id="ATP1B3"/>
<dbReference type="GenomeRNAi" id="483"/>
<dbReference type="Pharos" id="P54709">
    <property type="development level" value="Tclin"/>
</dbReference>
<dbReference type="PRO" id="PR:P54709"/>
<dbReference type="Proteomes" id="UP000005640">
    <property type="component" value="Chromosome 3"/>
</dbReference>
<dbReference type="RNAct" id="P54709">
    <property type="molecule type" value="protein"/>
</dbReference>
<dbReference type="Bgee" id="ENSG00000069849">
    <property type="expression patterns" value="Expressed in sperm and 206 other cell types or tissues"/>
</dbReference>
<dbReference type="ExpressionAtlas" id="P54709">
    <property type="expression patterns" value="baseline and differential"/>
</dbReference>
<dbReference type="GO" id="GO:0016324">
    <property type="term" value="C:apical plasma membrane"/>
    <property type="evidence" value="ECO:0000250"/>
    <property type="project" value="UniProtKB"/>
</dbReference>
<dbReference type="GO" id="GO:0016323">
    <property type="term" value="C:basolateral plasma membrane"/>
    <property type="evidence" value="ECO:0000250"/>
    <property type="project" value="UniProtKB"/>
</dbReference>
<dbReference type="GO" id="GO:0070062">
    <property type="term" value="C:extracellular exosome"/>
    <property type="evidence" value="ECO:0007005"/>
    <property type="project" value="UniProtKB"/>
</dbReference>
<dbReference type="GO" id="GO:0042470">
    <property type="term" value="C:melanosome"/>
    <property type="evidence" value="ECO:0007669"/>
    <property type="project" value="UniProtKB-SubCell"/>
</dbReference>
<dbReference type="GO" id="GO:0005886">
    <property type="term" value="C:plasma membrane"/>
    <property type="evidence" value="ECO:0000314"/>
    <property type="project" value="BHF-UCL"/>
</dbReference>
<dbReference type="GO" id="GO:0005890">
    <property type="term" value="C:sodium:potassium-exchanging ATPase complex"/>
    <property type="evidence" value="ECO:0000314"/>
    <property type="project" value="BHF-UCL"/>
</dbReference>
<dbReference type="GO" id="GO:0036126">
    <property type="term" value="C:sperm flagellum"/>
    <property type="evidence" value="ECO:0000314"/>
    <property type="project" value="ARUK-UCL"/>
</dbReference>
<dbReference type="GO" id="GO:0001671">
    <property type="term" value="F:ATPase activator activity"/>
    <property type="evidence" value="ECO:0000314"/>
    <property type="project" value="BHF-UCL"/>
</dbReference>
<dbReference type="GO" id="GO:0051117">
    <property type="term" value="F:ATPase binding"/>
    <property type="evidence" value="ECO:0000353"/>
    <property type="project" value="BHF-UCL"/>
</dbReference>
<dbReference type="GO" id="GO:0030674">
    <property type="term" value="F:protein-macromolecule adaptor activity"/>
    <property type="evidence" value="ECO:0000314"/>
    <property type="project" value="BHF-UCL"/>
</dbReference>
<dbReference type="GO" id="GO:0141109">
    <property type="term" value="F:transporter activator activity"/>
    <property type="evidence" value="ECO:0000314"/>
    <property type="project" value="BHF-UCL"/>
</dbReference>
<dbReference type="GO" id="GO:0030007">
    <property type="term" value="P:intracellular potassium ion homeostasis"/>
    <property type="evidence" value="ECO:0000314"/>
    <property type="project" value="BHF-UCL"/>
</dbReference>
<dbReference type="GO" id="GO:0006883">
    <property type="term" value="P:intracellular sodium ion homeostasis"/>
    <property type="evidence" value="ECO:0000314"/>
    <property type="project" value="BHF-UCL"/>
</dbReference>
<dbReference type="GO" id="GO:0086009">
    <property type="term" value="P:membrane repolarization"/>
    <property type="evidence" value="ECO:0000314"/>
    <property type="project" value="BHF-UCL"/>
</dbReference>
<dbReference type="GO" id="GO:1903288">
    <property type="term" value="P:positive regulation of potassium ion import across plasma membrane"/>
    <property type="evidence" value="ECO:0000314"/>
    <property type="project" value="BHF-UCL"/>
</dbReference>
<dbReference type="GO" id="GO:1903278">
    <property type="term" value="P:positive regulation of sodium ion export across plasma membrane"/>
    <property type="evidence" value="ECO:0000314"/>
    <property type="project" value="BHF-UCL"/>
</dbReference>
<dbReference type="GO" id="GO:1990573">
    <property type="term" value="P:potassium ion import across plasma membrane"/>
    <property type="evidence" value="ECO:0000314"/>
    <property type="project" value="BHF-UCL"/>
</dbReference>
<dbReference type="GO" id="GO:0071805">
    <property type="term" value="P:potassium ion transmembrane transport"/>
    <property type="evidence" value="ECO:0000316"/>
    <property type="project" value="ARUK-UCL"/>
</dbReference>
<dbReference type="GO" id="GO:0072659">
    <property type="term" value="P:protein localization to plasma membrane"/>
    <property type="evidence" value="ECO:0000314"/>
    <property type="project" value="BHF-UCL"/>
</dbReference>
<dbReference type="GO" id="GO:0050821">
    <property type="term" value="P:protein stabilization"/>
    <property type="evidence" value="ECO:0000314"/>
    <property type="project" value="BHF-UCL"/>
</dbReference>
<dbReference type="GO" id="GO:0036376">
    <property type="term" value="P:sodium ion export across plasma membrane"/>
    <property type="evidence" value="ECO:0000314"/>
    <property type="project" value="BHF-UCL"/>
</dbReference>
<dbReference type="GO" id="GO:0035725">
    <property type="term" value="P:sodium ion transmembrane transport"/>
    <property type="evidence" value="ECO:0000316"/>
    <property type="project" value="ARUK-UCL"/>
</dbReference>
<dbReference type="FunFam" id="1.20.5.170:FF:000068">
    <property type="entry name" value="Sodium/potassium-transporting ATPase subunit beta"/>
    <property type="match status" value="1"/>
</dbReference>
<dbReference type="FunFam" id="2.60.40.1660:FF:000005">
    <property type="entry name" value="Sodium/potassium-transporting ATPase subunit beta"/>
    <property type="match status" value="1"/>
</dbReference>
<dbReference type="Gene3D" id="2.60.40.1660">
    <property type="entry name" value="Na, k-atpase alpha subunit"/>
    <property type="match status" value="1"/>
</dbReference>
<dbReference type="InterPro" id="IPR000402">
    <property type="entry name" value="Na/K_ATPase_sub_beta"/>
</dbReference>
<dbReference type="InterPro" id="IPR038702">
    <property type="entry name" value="Na/K_ATPase_sub_beta_sf"/>
</dbReference>
<dbReference type="NCBIfam" id="TIGR01107">
    <property type="entry name" value="Na_K_ATPase_bet"/>
    <property type="match status" value="1"/>
</dbReference>
<dbReference type="PANTHER" id="PTHR11523">
    <property type="entry name" value="SODIUM/POTASSIUM-DEPENDENT ATPASE BETA SUBUNIT"/>
    <property type="match status" value="1"/>
</dbReference>
<dbReference type="PANTHER" id="PTHR11523:SF47">
    <property type="entry name" value="SODIUM_POTASSIUM-TRANSPORTING ATPASE SUBUNIT BETA-3"/>
    <property type="match status" value="1"/>
</dbReference>
<dbReference type="Pfam" id="PF00287">
    <property type="entry name" value="Na_K-ATPase"/>
    <property type="match status" value="1"/>
</dbReference>
<dbReference type="PROSITE" id="PS00390">
    <property type="entry name" value="ATPASE_NA_K_BETA_1"/>
    <property type="match status" value="1"/>
</dbReference>
<evidence type="ECO:0000250" key="1"/>
<evidence type="ECO:0000250" key="2">
    <source>
        <dbReference type="UniProtKB" id="Q63377"/>
    </source>
</evidence>
<evidence type="ECO:0000255" key="3"/>
<evidence type="ECO:0000269" key="4">
    <source>
    </source>
</evidence>
<evidence type="ECO:0000269" key="5">
    <source>
    </source>
</evidence>
<evidence type="ECO:0000303" key="6">
    <source>
    </source>
</evidence>
<evidence type="ECO:0000305" key="7"/>
<reference key="1">
    <citation type="journal article" date="1996" name="J. Biol. Chem.">
        <title>Identification of the mammalian Na,K-ATPase 3 subunit.</title>
        <authorList>
            <person name="Malik N."/>
            <person name="Canfield V.A."/>
            <person name="Beckers M.C."/>
            <person name="Gros P."/>
            <person name="Levenson R."/>
        </authorList>
    </citation>
    <scope>NUCLEOTIDE SEQUENCE [MRNA] (ISOFORM 1)</scope>
    <source>
        <tissue>Placenta</tissue>
    </source>
</reference>
<reference key="2">
    <citation type="journal article" date="1998" name="Mamm. Genome">
        <title>Structural organization and chromosomal localization of the human Na,K- ATPase beta 3 subunit gene and pseudogene.</title>
        <authorList>
            <person name="Malik N."/>
            <person name="Canfield V."/>
            <person name="Sanchez-Watts G."/>
            <person name="Watts A.G."/>
            <person name="Scherer S."/>
            <person name="Beatty B.G."/>
            <person name="Gros P."/>
            <person name="Levenson R."/>
        </authorList>
    </citation>
    <scope>NUCLEOTIDE SEQUENCE [GENOMIC DNA]</scope>
</reference>
<reference key="3">
    <citation type="journal article" date="2004" name="Nat. Genet.">
        <title>Complete sequencing and characterization of 21,243 full-length human cDNAs.</title>
        <authorList>
            <person name="Ota T."/>
            <person name="Suzuki Y."/>
            <person name="Nishikawa T."/>
            <person name="Otsuki T."/>
            <person name="Sugiyama T."/>
            <person name="Irie R."/>
            <person name="Wakamatsu A."/>
            <person name="Hayashi K."/>
            <person name="Sato H."/>
            <person name="Nagai K."/>
            <person name="Kimura K."/>
            <person name="Makita H."/>
            <person name="Sekine M."/>
            <person name="Obayashi M."/>
            <person name="Nishi T."/>
            <person name="Shibahara T."/>
            <person name="Tanaka T."/>
            <person name="Ishii S."/>
            <person name="Yamamoto J."/>
            <person name="Saito K."/>
            <person name="Kawai Y."/>
            <person name="Isono Y."/>
            <person name="Nakamura Y."/>
            <person name="Nagahari K."/>
            <person name="Murakami K."/>
            <person name="Yasuda T."/>
            <person name="Iwayanagi T."/>
            <person name="Wagatsuma M."/>
            <person name="Shiratori A."/>
            <person name="Sudo H."/>
            <person name="Hosoiri T."/>
            <person name="Kaku Y."/>
            <person name="Kodaira H."/>
            <person name="Kondo H."/>
            <person name="Sugawara M."/>
            <person name="Takahashi M."/>
            <person name="Kanda K."/>
            <person name="Yokoi T."/>
            <person name="Furuya T."/>
            <person name="Kikkawa E."/>
            <person name="Omura Y."/>
            <person name="Abe K."/>
            <person name="Kamihara K."/>
            <person name="Katsuta N."/>
            <person name="Sato K."/>
            <person name="Tanikawa M."/>
            <person name="Yamazaki M."/>
            <person name="Ninomiya K."/>
            <person name="Ishibashi T."/>
            <person name="Yamashita H."/>
            <person name="Murakawa K."/>
            <person name="Fujimori K."/>
            <person name="Tanai H."/>
            <person name="Kimata M."/>
            <person name="Watanabe M."/>
            <person name="Hiraoka S."/>
            <person name="Chiba Y."/>
            <person name="Ishida S."/>
            <person name="Ono Y."/>
            <person name="Takiguchi S."/>
            <person name="Watanabe S."/>
            <person name="Yosida M."/>
            <person name="Hotuta T."/>
            <person name="Kusano J."/>
            <person name="Kanehori K."/>
            <person name="Takahashi-Fujii A."/>
            <person name="Hara H."/>
            <person name="Tanase T.-O."/>
            <person name="Nomura Y."/>
            <person name="Togiya S."/>
            <person name="Komai F."/>
            <person name="Hara R."/>
            <person name="Takeuchi K."/>
            <person name="Arita M."/>
            <person name="Imose N."/>
            <person name="Musashino K."/>
            <person name="Yuuki H."/>
            <person name="Oshima A."/>
            <person name="Sasaki N."/>
            <person name="Aotsuka S."/>
            <person name="Yoshikawa Y."/>
            <person name="Matsunawa H."/>
            <person name="Ichihara T."/>
            <person name="Shiohata N."/>
            <person name="Sano S."/>
            <person name="Moriya S."/>
            <person name="Momiyama H."/>
            <person name="Satoh N."/>
            <person name="Takami S."/>
            <person name="Terashima Y."/>
            <person name="Suzuki O."/>
            <person name="Nakagawa S."/>
            <person name="Senoh A."/>
            <person name="Mizoguchi H."/>
            <person name="Goto Y."/>
            <person name="Shimizu F."/>
            <person name="Wakebe H."/>
            <person name="Hishigaki H."/>
            <person name="Watanabe T."/>
            <person name="Sugiyama A."/>
            <person name="Takemoto M."/>
            <person name="Kawakami B."/>
            <person name="Yamazaki M."/>
            <person name="Watanabe K."/>
            <person name="Kumagai A."/>
            <person name="Itakura S."/>
            <person name="Fukuzumi Y."/>
            <person name="Fujimori Y."/>
            <person name="Komiyama M."/>
            <person name="Tashiro H."/>
            <person name="Tanigami A."/>
            <person name="Fujiwara T."/>
            <person name="Ono T."/>
            <person name="Yamada K."/>
            <person name="Fujii Y."/>
            <person name="Ozaki K."/>
            <person name="Hirao M."/>
            <person name="Ohmori Y."/>
            <person name="Kawabata A."/>
            <person name="Hikiji T."/>
            <person name="Kobatake N."/>
            <person name="Inagaki H."/>
            <person name="Ikema Y."/>
            <person name="Okamoto S."/>
            <person name="Okitani R."/>
            <person name="Kawakami T."/>
            <person name="Noguchi S."/>
            <person name="Itoh T."/>
            <person name="Shigeta K."/>
            <person name="Senba T."/>
            <person name="Matsumura K."/>
            <person name="Nakajima Y."/>
            <person name="Mizuno T."/>
            <person name="Morinaga M."/>
            <person name="Sasaki M."/>
            <person name="Togashi T."/>
            <person name="Oyama M."/>
            <person name="Hata H."/>
            <person name="Watanabe M."/>
            <person name="Komatsu T."/>
            <person name="Mizushima-Sugano J."/>
            <person name="Satoh T."/>
            <person name="Shirai Y."/>
            <person name="Takahashi Y."/>
            <person name="Nakagawa K."/>
            <person name="Okumura K."/>
            <person name="Nagase T."/>
            <person name="Nomura N."/>
            <person name="Kikuchi H."/>
            <person name="Masuho Y."/>
            <person name="Yamashita R."/>
            <person name="Nakai K."/>
            <person name="Yada T."/>
            <person name="Nakamura Y."/>
            <person name="Ohara O."/>
            <person name="Isogai T."/>
            <person name="Sugano S."/>
        </authorList>
    </citation>
    <scope>NUCLEOTIDE SEQUENCE [LARGE SCALE MRNA] (ISOFORM 2)</scope>
    <source>
        <tissue>Cerebellum</tissue>
    </source>
</reference>
<reference key="4">
    <citation type="journal article" date="2006" name="Nature">
        <title>The DNA sequence, annotation and analysis of human chromosome 3.</title>
        <authorList>
            <person name="Muzny D.M."/>
            <person name="Scherer S.E."/>
            <person name="Kaul R."/>
            <person name="Wang J."/>
            <person name="Yu J."/>
            <person name="Sudbrak R."/>
            <person name="Buhay C.J."/>
            <person name="Chen R."/>
            <person name="Cree A."/>
            <person name="Ding Y."/>
            <person name="Dugan-Rocha S."/>
            <person name="Gill R."/>
            <person name="Gunaratne P."/>
            <person name="Harris R.A."/>
            <person name="Hawes A.C."/>
            <person name="Hernandez J."/>
            <person name="Hodgson A.V."/>
            <person name="Hume J."/>
            <person name="Jackson A."/>
            <person name="Khan Z.M."/>
            <person name="Kovar-Smith C."/>
            <person name="Lewis L.R."/>
            <person name="Lozado R.J."/>
            <person name="Metzker M.L."/>
            <person name="Milosavljevic A."/>
            <person name="Miner G.R."/>
            <person name="Morgan M.B."/>
            <person name="Nazareth L.V."/>
            <person name="Scott G."/>
            <person name="Sodergren E."/>
            <person name="Song X.-Z."/>
            <person name="Steffen D."/>
            <person name="Wei S."/>
            <person name="Wheeler D.A."/>
            <person name="Wright M.W."/>
            <person name="Worley K.C."/>
            <person name="Yuan Y."/>
            <person name="Zhang Z."/>
            <person name="Adams C.Q."/>
            <person name="Ansari-Lari M.A."/>
            <person name="Ayele M."/>
            <person name="Brown M.J."/>
            <person name="Chen G."/>
            <person name="Chen Z."/>
            <person name="Clendenning J."/>
            <person name="Clerc-Blankenburg K.P."/>
            <person name="Chen R."/>
            <person name="Chen Z."/>
            <person name="Davis C."/>
            <person name="Delgado O."/>
            <person name="Dinh H.H."/>
            <person name="Dong W."/>
            <person name="Draper H."/>
            <person name="Ernst S."/>
            <person name="Fu G."/>
            <person name="Gonzalez-Garay M.L."/>
            <person name="Garcia D.K."/>
            <person name="Gillett W."/>
            <person name="Gu J."/>
            <person name="Hao B."/>
            <person name="Haugen E."/>
            <person name="Havlak P."/>
            <person name="He X."/>
            <person name="Hennig S."/>
            <person name="Hu S."/>
            <person name="Huang W."/>
            <person name="Jackson L.R."/>
            <person name="Jacob L.S."/>
            <person name="Kelly S.H."/>
            <person name="Kube M."/>
            <person name="Levy R."/>
            <person name="Li Z."/>
            <person name="Liu B."/>
            <person name="Liu J."/>
            <person name="Liu W."/>
            <person name="Lu J."/>
            <person name="Maheshwari M."/>
            <person name="Nguyen B.-V."/>
            <person name="Okwuonu G.O."/>
            <person name="Palmeiri A."/>
            <person name="Pasternak S."/>
            <person name="Perez L.M."/>
            <person name="Phelps K.A."/>
            <person name="Plopper F.J."/>
            <person name="Qiang B."/>
            <person name="Raymond C."/>
            <person name="Rodriguez R."/>
            <person name="Saenphimmachak C."/>
            <person name="Santibanez J."/>
            <person name="Shen H."/>
            <person name="Shen Y."/>
            <person name="Subramanian S."/>
            <person name="Tabor P.E."/>
            <person name="Verduzco D."/>
            <person name="Waldron L."/>
            <person name="Wang J."/>
            <person name="Wang J."/>
            <person name="Wang Q."/>
            <person name="Williams G.A."/>
            <person name="Wong G.K.-S."/>
            <person name="Yao Z."/>
            <person name="Zhang J."/>
            <person name="Zhang X."/>
            <person name="Zhao G."/>
            <person name="Zhou J."/>
            <person name="Zhou Y."/>
            <person name="Nelson D."/>
            <person name="Lehrach H."/>
            <person name="Reinhardt R."/>
            <person name="Naylor S.L."/>
            <person name="Yang H."/>
            <person name="Olson M."/>
            <person name="Weinstock G."/>
            <person name="Gibbs R.A."/>
        </authorList>
    </citation>
    <scope>NUCLEOTIDE SEQUENCE [LARGE SCALE GENOMIC DNA]</scope>
</reference>
<reference key="5">
    <citation type="journal article" date="2004" name="Genome Res.">
        <title>The status, quality, and expansion of the NIH full-length cDNA project: the Mammalian Gene Collection (MGC).</title>
        <authorList>
            <consortium name="The MGC Project Team"/>
        </authorList>
    </citation>
    <scope>NUCLEOTIDE SEQUENCE [LARGE SCALE MRNA] (ISOFORM 1)</scope>
    <source>
        <tissue>Lung</tissue>
    </source>
</reference>
<reference key="6">
    <citation type="journal article" date="2003" name="Nat. Biotechnol.">
        <title>Identification and quantification of N-linked glycoproteins using hydrazide chemistry, stable isotope labeling and mass spectrometry.</title>
        <authorList>
            <person name="Zhang H."/>
            <person name="Li X.-J."/>
            <person name="Martin D.B."/>
            <person name="Aebersold R."/>
        </authorList>
    </citation>
    <scope>GLYCOSYLATION AT ASN-240</scope>
</reference>
<reference key="7">
    <citation type="journal article" date="2006" name="J. Proteome Res.">
        <title>Proteomic and bioinformatic characterization of the biogenesis and function of melanosomes.</title>
        <authorList>
            <person name="Chi A."/>
            <person name="Valencia J.C."/>
            <person name="Hu Z.-Z."/>
            <person name="Watabe H."/>
            <person name="Yamaguchi H."/>
            <person name="Mangini N.J."/>
            <person name="Huang H."/>
            <person name="Canfield V.A."/>
            <person name="Cheng K.C."/>
            <person name="Yang F."/>
            <person name="Abe R."/>
            <person name="Yamagishi S."/>
            <person name="Shabanowitz J."/>
            <person name="Hearing V.J."/>
            <person name="Wu C."/>
            <person name="Appella E."/>
            <person name="Hunt D.F."/>
        </authorList>
    </citation>
    <scope>SUBCELLULAR LOCATION [LARGE SCALE ANALYSIS]</scope>
    <source>
        <tissue>Melanoma</tissue>
    </source>
</reference>
<reference key="8">
    <citation type="journal article" date="2011" name="BMC Syst. Biol.">
        <title>Initial characterization of the human central proteome.</title>
        <authorList>
            <person name="Burkard T.R."/>
            <person name="Planyavsky M."/>
            <person name="Kaupe I."/>
            <person name="Breitwieser F.P."/>
            <person name="Buerckstuemmer T."/>
            <person name="Bennett K.L."/>
            <person name="Superti-Furga G."/>
            <person name="Colinge J."/>
        </authorList>
    </citation>
    <scope>IDENTIFICATION BY MASS SPECTROMETRY [LARGE SCALE ANALYSIS]</scope>
</reference>
<reference key="9">
    <citation type="journal article" date="2015" name="Proteomics">
        <title>N-terminome analysis of the human mitochondrial proteome.</title>
        <authorList>
            <person name="Vaca Jacome A.S."/>
            <person name="Rabilloud T."/>
            <person name="Schaeffer-Reiss C."/>
            <person name="Rompais M."/>
            <person name="Ayoub D."/>
            <person name="Lane L."/>
            <person name="Bairoch A."/>
            <person name="Van Dorsselaer A."/>
            <person name="Carapito C."/>
        </authorList>
    </citation>
    <scope>IDENTIFICATION BY MASS SPECTROMETRY [LARGE SCALE ANALYSIS]</scope>
</reference>
<sequence length="279" mass="31513">MTKNEKKSLNQSLAEWKLFIYNPTTGEFLGRTAKSWGLILLFYLVFYGFLAALFSFTMWVMLQTLNDEVPKYRDQIPSPGLMVFPKPVTALEYTFSRSDPTSYAGYIEDLKKFLKPYTLEEQKNLTVCPDGALFEQKGPVYVACQFPISLLQACSGMNDPDFGYSQGNPCILVKMNRIIGLKPEGVPRIDCVSKNEDIPNVAVYPHNGMIDLKYFPYYGKKLHVGYLQPLVAVQVSFAPNNTGKEVTVECKIDGSANLKSQDDRDKFLGRVMFKITARA</sequence>
<feature type="chain" id="PRO_0000219108" description="Sodium/potassium-transporting ATPase subunit beta-3">
    <location>
        <begin position="1"/>
        <end position="279"/>
    </location>
</feature>
<feature type="topological domain" description="Cytoplasmic" evidence="3">
    <location>
        <begin position="1"/>
        <end position="35"/>
    </location>
</feature>
<feature type="transmembrane region" description="Helical; Signal-anchor for type II membrane protein" evidence="3">
    <location>
        <begin position="36"/>
        <end position="56"/>
    </location>
</feature>
<feature type="topological domain" description="Extracellular" evidence="3">
    <location>
        <begin position="57"/>
        <end position="279"/>
    </location>
</feature>
<feature type="region of interest" description="immunoglobulin-like" evidence="1">
    <location>
        <begin position="186"/>
        <end position="279"/>
    </location>
</feature>
<feature type="glycosylation site" description="N-linked (GlcNAc...) asparagine" evidence="3">
    <location>
        <position position="124"/>
    </location>
</feature>
<feature type="glycosylation site" description="N-linked (GlcNAc...) asparagine" evidence="4">
    <location>
        <position position="240"/>
    </location>
</feature>
<feature type="disulfide bond" evidence="1">
    <location>
        <begin position="128"/>
        <end position="144"/>
    </location>
</feature>
<feature type="disulfide bond" evidence="1">
    <location>
        <begin position="154"/>
        <end position="170"/>
    </location>
</feature>
<feature type="disulfide bond" evidence="1">
    <location>
        <begin position="191"/>
        <end position="250"/>
    </location>
</feature>
<feature type="splice variant" id="VSP_056686" description="In isoform 2." evidence="6">
    <original>MTKNEKKSLNQSLAEWKLFIYNPTTGEFLGRTAKSW</original>
    <variation>MLSEGDILFSSLLSSPSLFWPP</variation>
    <location>
        <begin position="1"/>
        <end position="36"/>
    </location>
</feature>
<feature type="splice variant" id="VSP_056687" description="In isoform 2." evidence="6">
    <original>NEDIPNVAVYPHNGMIDLKYFPYYGKKLHVGYLQPLVAVQVSFAPNNTGKEVTVECKIDGSANLKSQDDRDKFLGRVMFKITARA</original>
    <variation>TNNVKDGMKIYQM</variation>
    <location>
        <begin position="195"/>
        <end position="279"/>
    </location>
</feature>
<keyword id="KW-0025">Alternative splicing</keyword>
<keyword id="KW-1003">Cell membrane</keyword>
<keyword id="KW-1015">Disulfide bond</keyword>
<keyword id="KW-0325">Glycoprotein</keyword>
<keyword id="KW-0406">Ion transport</keyword>
<keyword id="KW-0472">Membrane</keyword>
<keyword id="KW-0630">Potassium</keyword>
<keyword id="KW-0633">Potassium transport</keyword>
<keyword id="KW-1267">Proteomics identification</keyword>
<keyword id="KW-1185">Reference proteome</keyword>
<keyword id="KW-0735">Signal-anchor</keyword>
<keyword id="KW-0915">Sodium</keyword>
<keyword id="KW-0739">Sodium transport</keyword>
<keyword id="KW-0740">Sodium/potassium transport</keyword>
<keyword id="KW-0812">Transmembrane</keyword>
<keyword id="KW-1133">Transmembrane helix</keyword>
<keyword id="KW-0813">Transport</keyword>
<accession>P54709</accession>
<accession>B7Z1N7</accession>
<protein>
    <recommendedName>
        <fullName>Sodium/potassium-transporting ATPase subunit beta-3</fullName>
    </recommendedName>
    <alternativeName>
        <fullName>Sodium/potassium-dependent ATPase subunit beta-3</fullName>
        <shortName>ATPB-3</shortName>
    </alternativeName>
    <cdAntigenName>CD298</cdAntigenName>
</protein>
<proteinExistence type="evidence at protein level"/>
<comment type="function">
    <text>This is the non-catalytic component of the active enzyme, which catalyzes the hydrolysis of ATP coupled with the exchange of Na(+) and K(+) ions across the plasma membrane. The exact function of the beta-3 subunit is not known.</text>
</comment>
<comment type="subunit">
    <text evidence="2">The sodium/potassium-transporting ATPase is composed of a catalytic alpha subunit, an auxiliary non-catalytic beta subunit and an additional regulatory subunit. Interacts with catalytic alpha subunit ATP12A.</text>
</comment>
<comment type="interaction">
    <interactant intactId="EBI-1054481">
        <id>P54709</id>
    </interactant>
    <interactant intactId="EBI-12019274">
        <id>Q4LDR2</id>
        <label>CTXN3</label>
    </interactant>
    <organismsDiffer>false</organismsDiffer>
    <experiments>3</experiments>
</comment>
<comment type="interaction">
    <interactant intactId="EBI-1054481">
        <id>P54709</id>
    </interactant>
    <interactant intactId="EBI-10226799">
        <id>Q0VAQ4</id>
        <label>SMAGP</label>
    </interactant>
    <organismsDiffer>false</organismsDiffer>
    <experiments>3</experiments>
</comment>
<comment type="interaction">
    <interactant intactId="EBI-1054481">
        <id>P54709</id>
    </interactant>
    <interactant intactId="EBI-1211440">
        <id>P27105</id>
        <label>STOM</label>
    </interactant>
    <organismsDiffer>false</organismsDiffer>
    <experiments>3</experiments>
</comment>
<comment type="interaction">
    <interactant intactId="EBI-1054481">
        <id>P54709</id>
    </interactant>
    <interactant intactId="EBI-7333781">
        <id>Q9Y2Y6</id>
        <label>TMEM98</label>
    </interactant>
    <organismsDiffer>false</organismsDiffer>
    <experiments>3</experiments>
</comment>
<comment type="subcellular location">
    <subcellularLocation>
        <location evidence="2">Apical cell membrane</location>
        <topology evidence="3">Single-pass type II membrane protein</topology>
    </subcellularLocation>
    <subcellularLocation>
        <location evidence="2">Basolateral cell membrane</location>
        <topology evidence="3">Single-pass type II membrane protein</topology>
    </subcellularLocation>
    <subcellularLocation>
        <location evidence="5">Melanosome</location>
    </subcellularLocation>
    <text>Identified by mass spectrometry in melanosome fractions from stage I to stage IV.</text>
</comment>
<comment type="alternative products">
    <event type="alternative splicing"/>
    <isoform>
        <id>P54709-1</id>
        <name>1</name>
        <sequence type="displayed"/>
    </isoform>
    <isoform>
        <id>P54709-2</id>
        <name>2</name>
        <sequence type="described" ref="VSP_056686 VSP_056687"/>
    </isoform>
</comment>
<comment type="domain">
    <text evidence="1">The C-terminal lobe folds into an immunoglobulin-like domain and may mediate cell adhesion properties.</text>
</comment>
<comment type="similarity">
    <text evidence="7">Belongs to the X(+)/potassium ATPases subunit beta family.</text>
</comment>
<gene>
    <name type="primary">ATP1B3</name>
</gene>
<name>AT1B3_HUMAN</name>
<organism>
    <name type="scientific">Homo sapiens</name>
    <name type="common">Human</name>
    <dbReference type="NCBI Taxonomy" id="9606"/>
    <lineage>
        <taxon>Eukaryota</taxon>
        <taxon>Metazoa</taxon>
        <taxon>Chordata</taxon>
        <taxon>Craniata</taxon>
        <taxon>Vertebrata</taxon>
        <taxon>Euteleostomi</taxon>
        <taxon>Mammalia</taxon>
        <taxon>Eutheria</taxon>
        <taxon>Euarchontoglires</taxon>
        <taxon>Primates</taxon>
        <taxon>Haplorrhini</taxon>
        <taxon>Catarrhini</taxon>
        <taxon>Hominidae</taxon>
        <taxon>Homo</taxon>
    </lineage>
</organism>